<protein>
    <recommendedName>
        <fullName evidence="1">Quinolinate synthase</fullName>
        <ecNumber evidence="1">2.5.1.72</ecNumber>
    </recommendedName>
</protein>
<name>NADA_ECO7I</name>
<keyword id="KW-0004">4Fe-4S</keyword>
<keyword id="KW-0963">Cytoplasm</keyword>
<keyword id="KW-0408">Iron</keyword>
<keyword id="KW-0411">Iron-sulfur</keyword>
<keyword id="KW-0479">Metal-binding</keyword>
<keyword id="KW-0662">Pyridine nucleotide biosynthesis</keyword>
<keyword id="KW-0808">Transferase</keyword>
<feature type="chain" id="PRO_1000129411" description="Quinolinate synthase">
    <location>
        <begin position="1"/>
        <end position="347"/>
    </location>
</feature>
<feature type="binding site" evidence="1">
    <location>
        <position position="47"/>
    </location>
    <ligand>
        <name>iminosuccinate</name>
        <dbReference type="ChEBI" id="CHEBI:77875"/>
    </ligand>
</feature>
<feature type="binding site" evidence="1">
    <location>
        <position position="68"/>
    </location>
    <ligand>
        <name>iminosuccinate</name>
        <dbReference type="ChEBI" id="CHEBI:77875"/>
    </ligand>
</feature>
<feature type="binding site" evidence="1">
    <location>
        <position position="113"/>
    </location>
    <ligand>
        <name>[4Fe-4S] cluster</name>
        <dbReference type="ChEBI" id="CHEBI:49883"/>
    </ligand>
</feature>
<feature type="binding site" evidence="1">
    <location>
        <begin position="139"/>
        <end position="141"/>
    </location>
    <ligand>
        <name>iminosuccinate</name>
        <dbReference type="ChEBI" id="CHEBI:77875"/>
    </ligand>
</feature>
<feature type="binding site" evidence="1">
    <location>
        <position position="156"/>
    </location>
    <ligand>
        <name>iminosuccinate</name>
        <dbReference type="ChEBI" id="CHEBI:77875"/>
    </ligand>
</feature>
<feature type="binding site" evidence="1">
    <location>
        <position position="200"/>
    </location>
    <ligand>
        <name>[4Fe-4S] cluster</name>
        <dbReference type="ChEBI" id="CHEBI:49883"/>
    </ligand>
</feature>
<feature type="binding site" evidence="1">
    <location>
        <begin position="226"/>
        <end position="228"/>
    </location>
    <ligand>
        <name>iminosuccinate</name>
        <dbReference type="ChEBI" id="CHEBI:77875"/>
    </ligand>
</feature>
<feature type="binding site" evidence="1">
    <location>
        <position position="243"/>
    </location>
    <ligand>
        <name>iminosuccinate</name>
        <dbReference type="ChEBI" id="CHEBI:77875"/>
    </ligand>
</feature>
<feature type="binding site" evidence="1">
    <location>
        <position position="297"/>
    </location>
    <ligand>
        <name>[4Fe-4S] cluster</name>
        <dbReference type="ChEBI" id="CHEBI:49883"/>
    </ligand>
</feature>
<organism>
    <name type="scientific">Escherichia coli O7:K1 (strain IAI39 / ExPEC)</name>
    <dbReference type="NCBI Taxonomy" id="585057"/>
    <lineage>
        <taxon>Bacteria</taxon>
        <taxon>Pseudomonadati</taxon>
        <taxon>Pseudomonadota</taxon>
        <taxon>Gammaproteobacteria</taxon>
        <taxon>Enterobacterales</taxon>
        <taxon>Enterobacteriaceae</taxon>
        <taxon>Escherichia</taxon>
    </lineage>
</organism>
<reference key="1">
    <citation type="journal article" date="2009" name="PLoS Genet.">
        <title>Organised genome dynamics in the Escherichia coli species results in highly diverse adaptive paths.</title>
        <authorList>
            <person name="Touchon M."/>
            <person name="Hoede C."/>
            <person name="Tenaillon O."/>
            <person name="Barbe V."/>
            <person name="Baeriswyl S."/>
            <person name="Bidet P."/>
            <person name="Bingen E."/>
            <person name="Bonacorsi S."/>
            <person name="Bouchier C."/>
            <person name="Bouvet O."/>
            <person name="Calteau A."/>
            <person name="Chiapello H."/>
            <person name="Clermont O."/>
            <person name="Cruveiller S."/>
            <person name="Danchin A."/>
            <person name="Diard M."/>
            <person name="Dossat C."/>
            <person name="Karoui M.E."/>
            <person name="Frapy E."/>
            <person name="Garry L."/>
            <person name="Ghigo J.M."/>
            <person name="Gilles A.M."/>
            <person name="Johnson J."/>
            <person name="Le Bouguenec C."/>
            <person name="Lescat M."/>
            <person name="Mangenot S."/>
            <person name="Martinez-Jehanne V."/>
            <person name="Matic I."/>
            <person name="Nassif X."/>
            <person name="Oztas S."/>
            <person name="Petit M.A."/>
            <person name="Pichon C."/>
            <person name="Rouy Z."/>
            <person name="Ruf C.S."/>
            <person name="Schneider D."/>
            <person name="Tourret J."/>
            <person name="Vacherie B."/>
            <person name="Vallenet D."/>
            <person name="Medigue C."/>
            <person name="Rocha E.P.C."/>
            <person name="Denamur E."/>
        </authorList>
    </citation>
    <scope>NUCLEOTIDE SEQUENCE [LARGE SCALE GENOMIC DNA]</scope>
    <source>
        <strain>IAI39 / ExPEC</strain>
    </source>
</reference>
<comment type="function">
    <text evidence="1">Catalyzes the condensation of iminoaspartate with dihydroxyacetone phosphate to form quinolinate.</text>
</comment>
<comment type="catalytic activity">
    <reaction evidence="1">
        <text>iminosuccinate + dihydroxyacetone phosphate = quinolinate + phosphate + 2 H2O + H(+)</text>
        <dbReference type="Rhea" id="RHEA:25888"/>
        <dbReference type="ChEBI" id="CHEBI:15377"/>
        <dbReference type="ChEBI" id="CHEBI:15378"/>
        <dbReference type="ChEBI" id="CHEBI:29959"/>
        <dbReference type="ChEBI" id="CHEBI:43474"/>
        <dbReference type="ChEBI" id="CHEBI:57642"/>
        <dbReference type="ChEBI" id="CHEBI:77875"/>
        <dbReference type="EC" id="2.5.1.72"/>
    </reaction>
    <physiologicalReaction direction="left-to-right" evidence="1">
        <dbReference type="Rhea" id="RHEA:25889"/>
    </physiologicalReaction>
</comment>
<comment type="cofactor">
    <cofactor evidence="1">
        <name>[4Fe-4S] cluster</name>
        <dbReference type="ChEBI" id="CHEBI:49883"/>
    </cofactor>
    <text evidence="1">Binds 1 [4Fe-4S] cluster per subunit.</text>
</comment>
<comment type="pathway">
    <text evidence="1">Cofactor biosynthesis; NAD(+) biosynthesis; quinolinate from iminoaspartate: step 1/1.</text>
</comment>
<comment type="subcellular location">
    <subcellularLocation>
        <location evidence="1">Cytoplasm</location>
    </subcellularLocation>
</comment>
<comment type="similarity">
    <text evidence="1">Belongs to the quinolinate synthase family. Type 1 subfamily.</text>
</comment>
<evidence type="ECO:0000255" key="1">
    <source>
        <dbReference type="HAMAP-Rule" id="MF_00567"/>
    </source>
</evidence>
<sequence length="347" mass="38269">MSVMFDPDTAIYPFPPKPTPLSIDEKAYYREKIKRLLKERNAVMVAHYYTDPEIQQLAEETGGCISDSLEMARFGAKHPASTLLVAGVRFMGETAKILSPEKTILMPTLQAECSLDLGCPVEEFNAFCDAHPDRTVVVYANTSAAVKARADWVVTSSIAVELIDHLDSLGEKIIWAPDKHLGRYVQKQTGADILCWQGACIVHDEFKTQALTRLQEEYPDAAILVHPESPQAIVDMADAVGSTSQLIAAAKTLPHQRLIVATDRGIFYKMQQAVPDKELLEAPTAGEGATCRSCAHCPWMAMNGLQAIAEALEQEGSNHEVHVDERLRERALVPLNRMLEFAATLRG</sequence>
<accession>B7NMW2</accession>
<proteinExistence type="inferred from homology"/>
<dbReference type="EC" id="2.5.1.72" evidence="1"/>
<dbReference type="EMBL" id="CU928164">
    <property type="protein sequence ID" value="CAR16855.1"/>
    <property type="molecule type" value="Genomic_DNA"/>
</dbReference>
<dbReference type="RefSeq" id="WP_000115281.1">
    <property type="nucleotide sequence ID" value="NC_011750.1"/>
</dbReference>
<dbReference type="RefSeq" id="YP_002406744.1">
    <property type="nucleotide sequence ID" value="NC_011750.1"/>
</dbReference>
<dbReference type="SMR" id="B7NMW2"/>
<dbReference type="STRING" id="585057.ECIAI39_0718"/>
<dbReference type="KEGG" id="ect:ECIAI39_0718"/>
<dbReference type="PATRIC" id="fig|585057.6.peg.761"/>
<dbReference type="HOGENOM" id="CLU_047382_1_0_6"/>
<dbReference type="UniPathway" id="UPA00253">
    <property type="reaction ID" value="UER00327"/>
</dbReference>
<dbReference type="Proteomes" id="UP000000749">
    <property type="component" value="Chromosome"/>
</dbReference>
<dbReference type="GO" id="GO:0005829">
    <property type="term" value="C:cytosol"/>
    <property type="evidence" value="ECO:0007669"/>
    <property type="project" value="TreeGrafter"/>
</dbReference>
<dbReference type="GO" id="GO:0051539">
    <property type="term" value="F:4 iron, 4 sulfur cluster binding"/>
    <property type="evidence" value="ECO:0007669"/>
    <property type="project" value="UniProtKB-KW"/>
</dbReference>
<dbReference type="GO" id="GO:0046872">
    <property type="term" value="F:metal ion binding"/>
    <property type="evidence" value="ECO:0007669"/>
    <property type="project" value="UniProtKB-KW"/>
</dbReference>
<dbReference type="GO" id="GO:0008987">
    <property type="term" value="F:quinolinate synthetase A activity"/>
    <property type="evidence" value="ECO:0007669"/>
    <property type="project" value="UniProtKB-UniRule"/>
</dbReference>
<dbReference type="GO" id="GO:0034628">
    <property type="term" value="P:'de novo' NAD biosynthetic process from L-aspartate"/>
    <property type="evidence" value="ECO:0007669"/>
    <property type="project" value="TreeGrafter"/>
</dbReference>
<dbReference type="FunFam" id="3.40.50.10800:FF:000001">
    <property type="entry name" value="Quinolinate synthase A"/>
    <property type="match status" value="1"/>
</dbReference>
<dbReference type="FunFam" id="3.40.50.10800:FF:000003">
    <property type="entry name" value="Quinolinate synthase A"/>
    <property type="match status" value="1"/>
</dbReference>
<dbReference type="Gene3D" id="3.40.50.10800">
    <property type="entry name" value="NadA-like"/>
    <property type="match status" value="3"/>
</dbReference>
<dbReference type="HAMAP" id="MF_00567">
    <property type="entry name" value="NadA_type1"/>
    <property type="match status" value="1"/>
</dbReference>
<dbReference type="InterPro" id="IPR003473">
    <property type="entry name" value="NadA"/>
</dbReference>
<dbReference type="InterPro" id="IPR036094">
    <property type="entry name" value="NadA_sf"/>
</dbReference>
<dbReference type="InterPro" id="IPR023513">
    <property type="entry name" value="Quinolinate_synth_A_type1"/>
</dbReference>
<dbReference type="NCBIfam" id="TIGR00550">
    <property type="entry name" value="nadA"/>
    <property type="match status" value="1"/>
</dbReference>
<dbReference type="NCBIfam" id="NF006877">
    <property type="entry name" value="PRK09375.1-1"/>
    <property type="match status" value="1"/>
</dbReference>
<dbReference type="NCBIfam" id="NF006878">
    <property type="entry name" value="PRK09375.1-2"/>
    <property type="match status" value="1"/>
</dbReference>
<dbReference type="PANTHER" id="PTHR30573:SF0">
    <property type="entry name" value="QUINOLINATE SYNTHASE, CHLOROPLASTIC"/>
    <property type="match status" value="1"/>
</dbReference>
<dbReference type="PANTHER" id="PTHR30573">
    <property type="entry name" value="QUINOLINATE SYNTHETASE A"/>
    <property type="match status" value="1"/>
</dbReference>
<dbReference type="Pfam" id="PF02445">
    <property type="entry name" value="NadA"/>
    <property type="match status" value="1"/>
</dbReference>
<dbReference type="SUPFAM" id="SSF142754">
    <property type="entry name" value="NadA-like"/>
    <property type="match status" value="1"/>
</dbReference>
<gene>
    <name evidence="1" type="primary">nadA</name>
    <name type="ordered locus">ECIAI39_0718</name>
</gene>